<sequence length="326" mass="35969">MAEVLLFEALRDALDEEMQRDPSVLVMGEDVGHYGGSYKVTKGFHEKYGDLRLLDTPIAENSFTGMAIGAAMTGLRPIVEGMNMGFLLLAFNQIANNAGMLHYTSGGNFKIPIVIRGPGGVGRQLGAEHSQRLESYFQSVPGLQMVACSTPYNGKGLLKSAIRNDNPVIFFEHVLLYNLNENLIEQEYLLCLEKAEVVRPGNDITILTYSRMRHHVLQAAKVLVNKGYDPEIIDILSLKPLDMGTISLSVRKTHKVLIVEECMRTGGIGASLRAAILEDLFDYLDAPIQCLSSQDVPTPYSGPLEELTVIQPNQIIQAVEEMCKIE</sequence>
<gene>
    <name type="primary">pdhB</name>
    <name type="synonym">odpB</name>
</gene>
<accession>Q8MA03</accession>
<proteinExistence type="inferred from homology"/>
<name>ODPB_CHAGL</name>
<protein>
    <recommendedName>
        <fullName>Pyruvate dehydrogenase E1 component subunit beta</fullName>
        <ecNumber>1.2.4.1</ecNumber>
    </recommendedName>
</protein>
<keyword id="KW-0150">Chloroplast</keyword>
<keyword id="KW-0479">Metal-binding</keyword>
<keyword id="KW-0560">Oxidoreductase</keyword>
<keyword id="KW-0934">Plastid</keyword>
<keyword id="KW-0630">Potassium</keyword>
<keyword id="KW-0670">Pyruvate</keyword>
<keyword id="KW-0786">Thiamine pyrophosphate</keyword>
<reference key="1">
    <citation type="journal article" date="2002" name="Proc. Natl. Acad. Sci. U.S.A.">
        <title>The chloroplast and mitochondrial genome sequences of the charophyte Chaetosphaeridium globosum: insights into the timing of the events that restructured organelle DNAs within the green algal lineage that led to land plants.</title>
        <authorList>
            <person name="Turmel M."/>
            <person name="Otis C."/>
            <person name="Lemieux C."/>
        </authorList>
    </citation>
    <scope>NUCLEOTIDE SEQUENCE [LARGE SCALE GENOMIC DNA]</scope>
    <source>
        <strain>M1311</strain>
    </source>
</reference>
<evidence type="ECO:0000250" key="1"/>
<evidence type="ECO:0000250" key="2">
    <source>
        <dbReference type="UniProtKB" id="P11177"/>
    </source>
</evidence>
<geneLocation type="chloroplast"/>
<dbReference type="EC" id="1.2.4.1"/>
<dbReference type="EMBL" id="AF494278">
    <property type="protein sequence ID" value="AAM96525.1"/>
    <property type="molecule type" value="Genomic_DNA"/>
</dbReference>
<dbReference type="RefSeq" id="NP_683783.1">
    <property type="nucleotide sequence ID" value="NC_004115.1"/>
</dbReference>
<dbReference type="SMR" id="Q8MA03"/>
<dbReference type="GeneID" id="860807"/>
<dbReference type="GO" id="GO:0009507">
    <property type="term" value="C:chloroplast"/>
    <property type="evidence" value="ECO:0007669"/>
    <property type="project" value="UniProtKB-SubCell"/>
</dbReference>
<dbReference type="GO" id="GO:0046872">
    <property type="term" value="F:metal ion binding"/>
    <property type="evidence" value="ECO:0007669"/>
    <property type="project" value="UniProtKB-KW"/>
</dbReference>
<dbReference type="GO" id="GO:0004739">
    <property type="term" value="F:pyruvate dehydrogenase (acetyl-transferring) activity"/>
    <property type="evidence" value="ECO:0007669"/>
    <property type="project" value="UniProtKB-EC"/>
</dbReference>
<dbReference type="CDD" id="cd07036">
    <property type="entry name" value="TPP_PYR_E1-PDHc-beta_like"/>
    <property type="match status" value="1"/>
</dbReference>
<dbReference type="FunFam" id="3.40.50.920:FF:000001">
    <property type="entry name" value="Pyruvate dehydrogenase E1 beta subunit"/>
    <property type="match status" value="1"/>
</dbReference>
<dbReference type="FunFam" id="3.40.50.970:FF:000001">
    <property type="entry name" value="Pyruvate dehydrogenase E1 beta subunit"/>
    <property type="match status" value="1"/>
</dbReference>
<dbReference type="Gene3D" id="3.40.50.920">
    <property type="match status" value="1"/>
</dbReference>
<dbReference type="Gene3D" id="3.40.50.970">
    <property type="match status" value="1"/>
</dbReference>
<dbReference type="InterPro" id="IPR029061">
    <property type="entry name" value="THDP-binding"/>
</dbReference>
<dbReference type="InterPro" id="IPR009014">
    <property type="entry name" value="Transketo_C/PFOR_II"/>
</dbReference>
<dbReference type="InterPro" id="IPR005475">
    <property type="entry name" value="Transketolase-like_Pyr-bd"/>
</dbReference>
<dbReference type="InterPro" id="IPR033248">
    <property type="entry name" value="Transketolase_C"/>
</dbReference>
<dbReference type="NCBIfam" id="NF006667">
    <property type="entry name" value="PRK09212.1"/>
    <property type="match status" value="1"/>
</dbReference>
<dbReference type="PANTHER" id="PTHR43257">
    <property type="entry name" value="PYRUVATE DEHYDROGENASE E1 COMPONENT BETA SUBUNIT"/>
    <property type="match status" value="1"/>
</dbReference>
<dbReference type="PANTHER" id="PTHR43257:SF2">
    <property type="entry name" value="PYRUVATE DEHYDROGENASE E1 COMPONENT SUBUNIT BETA"/>
    <property type="match status" value="1"/>
</dbReference>
<dbReference type="Pfam" id="PF02779">
    <property type="entry name" value="Transket_pyr"/>
    <property type="match status" value="1"/>
</dbReference>
<dbReference type="Pfam" id="PF02780">
    <property type="entry name" value="Transketolase_C"/>
    <property type="match status" value="1"/>
</dbReference>
<dbReference type="SMART" id="SM00861">
    <property type="entry name" value="Transket_pyr"/>
    <property type="match status" value="1"/>
</dbReference>
<dbReference type="SUPFAM" id="SSF52518">
    <property type="entry name" value="Thiamin diphosphate-binding fold (THDP-binding)"/>
    <property type="match status" value="1"/>
</dbReference>
<dbReference type="SUPFAM" id="SSF52922">
    <property type="entry name" value="TK C-terminal domain-like"/>
    <property type="match status" value="1"/>
</dbReference>
<organism>
    <name type="scientific">Chaetosphaeridium globosum</name>
    <name type="common">Charophycean green alga</name>
    <name type="synonym">Herposteiron globosum</name>
    <dbReference type="NCBI Taxonomy" id="96477"/>
    <lineage>
        <taxon>Eukaryota</taxon>
        <taxon>Viridiplantae</taxon>
        <taxon>Streptophyta</taxon>
        <taxon>Coleochaetophyceae</taxon>
        <taxon>Coleochaetales</taxon>
        <taxon>Chaetosphaeridiaceae</taxon>
        <taxon>Chaetosphaeridium</taxon>
    </lineage>
</organism>
<feature type="chain" id="PRO_0000280101" description="Pyruvate dehydrogenase E1 component subunit beta">
    <location>
        <begin position="1"/>
        <end position="326"/>
    </location>
</feature>
<feature type="binding site" evidence="2">
    <location>
        <position position="60"/>
    </location>
    <ligand>
        <name>thiamine diphosphate</name>
        <dbReference type="ChEBI" id="CHEBI:58937"/>
        <note>ligand shared with alpha subunit</note>
    </ligand>
</feature>
<feature type="binding site" evidence="2">
    <location>
        <position position="113"/>
    </location>
    <ligand>
        <name>K(+)</name>
        <dbReference type="ChEBI" id="CHEBI:29103"/>
        <note>structural</note>
    </ligand>
</feature>
<feature type="binding site" evidence="2">
    <location>
        <position position="161"/>
    </location>
    <ligand>
        <name>K(+)</name>
        <dbReference type="ChEBI" id="CHEBI:29103"/>
        <note>structural</note>
    </ligand>
</feature>
<feature type="binding site" evidence="2">
    <location>
        <position position="162"/>
    </location>
    <ligand>
        <name>K(+)</name>
        <dbReference type="ChEBI" id="CHEBI:29103"/>
        <note>structural</note>
    </ligand>
</feature>
<feature type="binding site" evidence="2">
    <location>
        <position position="166"/>
    </location>
    <ligand>
        <name>K(+)</name>
        <dbReference type="ChEBI" id="CHEBI:29103"/>
        <note>structural</note>
    </ligand>
</feature>
<comment type="function">
    <text evidence="1">The pyruvate dehydrogenase complex catalyzes the overall conversion of pyruvate to acetyl-CoA and CO(2). It contains multiple copies of three enzymatic components: pyruvate dehydrogenase (E1), dihydrolipoamide acetyltransferase (E2) and lipoamide dehydrogenase (E3) (By similarity).</text>
</comment>
<comment type="catalytic activity">
    <reaction>
        <text>N(6)-[(R)-lipoyl]-L-lysyl-[protein] + pyruvate + H(+) = N(6)-[(R)-S(8)-acetyldihydrolipoyl]-L-lysyl-[protein] + CO2</text>
        <dbReference type="Rhea" id="RHEA:19189"/>
        <dbReference type="Rhea" id="RHEA-COMP:10474"/>
        <dbReference type="Rhea" id="RHEA-COMP:10478"/>
        <dbReference type="ChEBI" id="CHEBI:15361"/>
        <dbReference type="ChEBI" id="CHEBI:15378"/>
        <dbReference type="ChEBI" id="CHEBI:16526"/>
        <dbReference type="ChEBI" id="CHEBI:83099"/>
        <dbReference type="ChEBI" id="CHEBI:83111"/>
        <dbReference type="EC" id="1.2.4.1"/>
    </reaction>
</comment>
<comment type="cofactor">
    <cofactor evidence="2">
        <name>thiamine diphosphate</name>
        <dbReference type="ChEBI" id="CHEBI:58937"/>
    </cofactor>
</comment>
<comment type="subunit">
    <text evidence="1">Heterodimer of an alpha and a beta chain.</text>
</comment>
<comment type="subcellular location">
    <subcellularLocation>
        <location>Plastid</location>
        <location>Chloroplast</location>
    </subcellularLocation>
</comment>